<feature type="initiator methionine" description="Removed" evidence="2">
    <location>
        <position position="1"/>
    </location>
</feature>
<feature type="chain" id="PRO_0000090147" description="Triosephosphate isomerase, cytosolic">
    <location>
        <begin position="2"/>
        <end position="253"/>
    </location>
</feature>
<feature type="active site" description="Electrophile" evidence="1">
    <location>
        <position position="96"/>
    </location>
</feature>
<feature type="active site" description="Proton acceptor" evidence="1">
    <location>
        <position position="166"/>
    </location>
</feature>
<feature type="binding site" evidence="1">
    <location>
        <position position="10"/>
    </location>
    <ligand>
        <name>substrate</name>
    </ligand>
</feature>
<feature type="binding site" evidence="1">
    <location>
        <position position="12"/>
    </location>
    <ligand>
        <name>substrate</name>
    </ligand>
</feature>
<feature type="sequence conflict" description="In Ref. 2; AA sequence." evidence="3" ref="2">
    <original>G</original>
    <variation>A</variation>
    <location>
        <position position="2"/>
    </location>
</feature>
<protein>
    <recommendedName>
        <fullName>Triosephosphate isomerase, cytosolic</fullName>
        <shortName>TIM</shortName>
        <shortName>Triose-phosphate isomerase</shortName>
        <ecNumber>5.3.1.1</ecNumber>
    </recommendedName>
</protein>
<dbReference type="EC" id="5.3.1.1"/>
<dbReference type="EMBL" id="U83414">
    <property type="protein sequence ID" value="AAB41052.1"/>
    <property type="molecule type" value="mRNA"/>
</dbReference>
<dbReference type="SMR" id="P34937"/>
<dbReference type="IntAct" id="P34937">
    <property type="interactions" value="1"/>
</dbReference>
<dbReference type="UniPathway" id="UPA00109">
    <property type="reaction ID" value="UER00189"/>
</dbReference>
<dbReference type="UniPathway" id="UPA00138"/>
<dbReference type="ExpressionAtlas" id="P34937">
    <property type="expression patterns" value="baseline and differential"/>
</dbReference>
<dbReference type="GO" id="GO:0005829">
    <property type="term" value="C:cytosol"/>
    <property type="evidence" value="ECO:0007669"/>
    <property type="project" value="TreeGrafter"/>
</dbReference>
<dbReference type="GO" id="GO:0004807">
    <property type="term" value="F:triose-phosphate isomerase activity"/>
    <property type="evidence" value="ECO:0007669"/>
    <property type="project" value="UniProtKB-EC"/>
</dbReference>
<dbReference type="GO" id="GO:0006094">
    <property type="term" value="P:gluconeogenesis"/>
    <property type="evidence" value="ECO:0007669"/>
    <property type="project" value="UniProtKB-UniPathway"/>
</dbReference>
<dbReference type="GO" id="GO:0046166">
    <property type="term" value="P:glyceraldehyde-3-phosphate biosynthetic process"/>
    <property type="evidence" value="ECO:0007669"/>
    <property type="project" value="TreeGrafter"/>
</dbReference>
<dbReference type="GO" id="GO:0019563">
    <property type="term" value="P:glycerol catabolic process"/>
    <property type="evidence" value="ECO:0007669"/>
    <property type="project" value="TreeGrafter"/>
</dbReference>
<dbReference type="GO" id="GO:0006096">
    <property type="term" value="P:glycolytic process"/>
    <property type="evidence" value="ECO:0007669"/>
    <property type="project" value="UniProtKB-UniPathway"/>
</dbReference>
<dbReference type="CDD" id="cd00311">
    <property type="entry name" value="TIM"/>
    <property type="match status" value="1"/>
</dbReference>
<dbReference type="FunFam" id="3.20.20.70:FF:000025">
    <property type="entry name" value="Triosephosphate isomerase"/>
    <property type="match status" value="1"/>
</dbReference>
<dbReference type="Gene3D" id="3.20.20.70">
    <property type="entry name" value="Aldolase class I"/>
    <property type="match status" value="1"/>
</dbReference>
<dbReference type="HAMAP" id="MF_00147_B">
    <property type="entry name" value="TIM_B"/>
    <property type="match status" value="1"/>
</dbReference>
<dbReference type="InterPro" id="IPR013785">
    <property type="entry name" value="Aldolase_TIM"/>
</dbReference>
<dbReference type="InterPro" id="IPR035990">
    <property type="entry name" value="TIM_sf"/>
</dbReference>
<dbReference type="InterPro" id="IPR022896">
    <property type="entry name" value="TrioseP_Isoase_bac/euk"/>
</dbReference>
<dbReference type="InterPro" id="IPR000652">
    <property type="entry name" value="Triosephosphate_isomerase"/>
</dbReference>
<dbReference type="InterPro" id="IPR020861">
    <property type="entry name" value="Triosephosphate_isomerase_AS"/>
</dbReference>
<dbReference type="NCBIfam" id="TIGR00419">
    <property type="entry name" value="tim"/>
    <property type="match status" value="1"/>
</dbReference>
<dbReference type="PANTHER" id="PTHR21139">
    <property type="entry name" value="TRIOSEPHOSPHATE ISOMERASE"/>
    <property type="match status" value="1"/>
</dbReference>
<dbReference type="PANTHER" id="PTHR21139:SF34">
    <property type="entry name" value="TRIOSEPHOSPHATE ISOMERASE, CYTOSOLIC"/>
    <property type="match status" value="1"/>
</dbReference>
<dbReference type="Pfam" id="PF00121">
    <property type="entry name" value="TIM"/>
    <property type="match status" value="1"/>
</dbReference>
<dbReference type="SUPFAM" id="SSF51351">
    <property type="entry name" value="Triosephosphate isomerase (TIM)"/>
    <property type="match status" value="1"/>
</dbReference>
<dbReference type="PROSITE" id="PS00171">
    <property type="entry name" value="TIM_1"/>
    <property type="match status" value="1"/>
</dbReference>
<dbReference type="PROSITE" id="PS51440">
    <property type="entry name" value="TIM_2"/>
    <property type="match status" value="1"/>
</dbReference>
<proteinExistence type="evidence at protein level"/>
<sequence>MGRKFFVGGNWKCNGTVEQVEAIVQTLNAGQIVSPDVVEVVVSPPYVFLPIVKAKLRPEIQVAAQNCWVKKGGAFTGEVSAEMLANLGVPWVILGHSERRSLLGESSEFVGEKVAYALAQGLKVIACVGETLEQREAGSTMEVVAEQTKAIAGKIKDWSNGVVAYEPVWAIGTGKVATPAQAQEVHANLRDWLKTNVSPEVAESTRIIYGGSVTGASCKELAAQADVDGFLVGGASLKPEFIDIINAAAVKSA</sequence>
<name>TPIS_HORVU</name>
<keyword id="KW-0963">Cytoplasm</keyword>
<keyword id="KW-0903">Direct protein sequencing</keyword>
<keyword id="KW-0312">Gluconeogenesis</keyword>
<keyword id="KW-0324">Glycolysis</keyword>
<keyword id="KW-0413">Isomerase</keyword>
<accession>P34937</accession>
<accession>P93189</accession>
<reference key="1">
    <citation type="submission" date="1997-01" db="EMBL/GenBank/DDBJ databases">
        <authorList>
            <person name="Rasmussen S.K."/>
        </authorList>
    </citation>
    <scope>NUCLEOTIDE SEQUENCE [MRNA]</scope>
    <source>
        <tissue>Leaf</tissue>
    </source>
</reference>
<reference key="2">
    <citation type="journal article" date="1993" name="Electrophoresis">
        <title>Separation of acidic barley endosperm proteins by two-dimensional electrophoresis.</title>
        <authorList>
            <person name="Flengsrud R."/>
        </authorList>
    </citation>
    <scope>PROTEIN SEQUENCE OF 2-10</scope>
    <source>
        <strain>cv. H354-295-2-5</strain>
        <tissue>Starchy endosperm</tissue>
    </source>
</reference>
<comment type="catalytic activity">
    <reaction>
        <text>D-glyceraldehyde 3-phosphate = dihydroxyacetone phosphate</text>
        <dbReference type="Rhea" id="RHEA:18585"/>
        <dbReference type="ChEBI" id="CHEBI:57642"/>
        <dbReference type="ChEBI" id="CHEBI:59776"/>
        <dbReference type="EC" id="5.3.1.1"/>
    </reaction>
</comment>
<comment type="pathway">
    <text>Carbohydrate biosynthesis; gluconeogenesis.</text>
</comment>
<comment type="pathway">
    <text>Carbohydrate degradation; glycolysis; D-glyceraldehyde 3-phosphate from glycerone phosphate: step 1/1.</text>
</comment>
<comment type="subunit">
    <text>Homodimer.</text>
</comment>
<comment type="subcellular location">
    <subcellularLocation>
        <location>Cytoplasm</location>
    </subcellularLocation>
</comment>
<comment type="tissue specificity">
    <text>Starchy endosperm.</text>
</comment>
<comment type="miscellaneous">
    <text>In plants, there are two types of TPIS, cytosolic and plastid.</text>
</comment>
<comment type="similarity">
    <text evidence="3">Belongs to the triosephosphate isomerase family.</text>
</comment>
<evidence type="ECO:0000250" key="1"/>
<evidence type="ECO:0000269" key="2">
    <source>
    </source>
</evidence>
<evidence type="ECO:0000305" key="3"/>
<organism>
    <name type="scientific">Hordeum vulgare</name>
    <name type="common">Barley</name>
    <dbReference type="NCBI Taxonomy" id="4513"/>
    <lineage>
        <taxon>Eukaryota</taxon>
        <taxon>Viridiplantae</taxon>
        <taxon>Streptophyta</taxon>
        <taxon>Embryophyta</taxon>
        <taxon>Tracheophyta</taxon>
        <taxon>Spermatophyta</taxon>
        <taxon>Magnoliopsida</taxon>
        <taxon>Liliopsida</taxon>
        <taxon>Poales</taxon>
        <taxon>Poaceae</taxon>
        <taxon>BOP clade</taxon>
        <taxon>Pooideae</taxon>
        <taxon>Triticodae</taxon>
        <taxon>Triticeae</taxon>
        <taxon>Hordeinae</taxon>
        <taxon>Hordeum</taxon>
    </lineage>
</organism>